<organism>
    <name type="scientific">Pseudomonas aeruginosa (strain ATCC 15692 / DSM 22644 / CIP 104116 / JCM 14847 / LMG 12228 / 1C / PRS 101 / PAO1)</name>
    <dbReference type="NCBI Taxonomy" id="208964"/>
    <lineage>
        <taxon>Bacteria</taxon>
        <taxon>Pseudomonadati</taxon>
        <taxon>Pseudomonadota</taxon>
        <taxon>Gammaproteobacteria</taxon>
        <taxon>Pseudomonadales</taxon>
        <taxon>Pseudomonadaceae</taxon>
        <taxon>Pseudomonas</taxon>
    </lineage>
</organism>
<name>METN1_PSEAE</name>
<evidence type="ECO:0000255" key="1">
    <source>
        <dbReference type="HAMAP-Rule" id="MF_01719"/>
    </source>
</evidence>
<reference key="1">
    <citation type="journal article" date="2000" name="Nature">
        <title>Complete genome sequence of Pseudomonas aeruginosa PAO1, an opportunistic pathogen.</title>
        <authorList>
            <person name="Stover C.K."/>
            <person name="Pham X.-Q.T."/>
            <person name="Erwin A.L."/>
            <person name="Mizoguchi S.D."/>
            <person name="Warrener P."/>
            <person name="Hickey M.J."/>
            <person name="Brinkman F.S.L."/>
            <person name="Hufnagle W.O."/>
            <person name="Kowalik D.J."/>
            <person name="Lagrou M."/>
            <person name="Garber R.L."/>
            <person name="Goltry L."/>
            <person name="Tolentino E."/>
            <person name="Westbrock-Wadman S."/>
            <person name="Yuan Y."/>
            <person name="Brody L.L."/>
            <person name="Coulter S.N."/>
            <person name="Folger K.R."/>
            <person name="Kas A."/>
            <person name="Larbig K."/>
            <person name="Lim R.M."/>
            <person name="Smith K.A."/>
            <person name="Spencer D.H."/>
            <person name="Wong G.K.-S."/>
            <person name="Wu Z."/>
            <person name="Paulsen I.T."/>
            <person name="Reizer J."/>
            <person name="Saier M.H. Jr."/>
            <person name="Hancock R.E.W."/>
            <person name="Lory S."/>
            <person name="Olson M.V."/>
        </authorList>
    </citation>
    <scope>NUCLEOTIDE SEQUENCE [LARGE SCALE GENOMIC DNA]</scope>
    <source>
        <strain>ATCC 15692 / DSM 22644 / CIP 104116 / JCM 14847 / LMG 12228 / 1C / PRS 101 / PAO1</strain>
    </source>
</reference>
<comment type="function">
    <text evidence="1">Part of the ABC transporter complex MetNIQ involved in methionine import. Responsible for energy coupling to the transport system.</text>
</comment>
<comment type="catalytic activity">
    <reaction evidence="1">
        <text>L-methionine(out) + ATP + H2O = L-methionine(in) + ADP + phosphate + H(+)</text>
        <dbReference type="Rhea" id="RHEA:29779"/>
        <dbReference type="ChEBI" id="CHEBI:15377"/>
        <dbReference type="ChEBI" id="CHEBI:15378"/>
        <dbReference type="ChEBI" id="CHEBI:30616"/>
        <dbReference type="ChEBI" id="CHEBI:43474"/>
        <dbReference type="ChEBI" id="CHEBI:57844"/>
        <dbReference type="ChEBI" id="CHEBI:456216"/>
        <dbReference type="EC" id="7.4.2.11"/>
    </reaction>
</comment>
<comment type="catalytic activity">
    <reaction evidence="1">
        <text>D-methionine(out) + ATP + H2O = D-methionine(in) + ADP + phosphate + H(+)</text>
        <dbReference type="Rhea" id="RHEA:29767"/>
        <dbReference type="ChEBI" id="CHEBI:15377"/>
        <dbReference type="ChEBI" id="CHEBI:15378"/>
        <dbReference type="ChEBI" id="CHEBI:30616"/>
        <dbReference type="ChEBI" id="CHEBI:43474"/>
        <dbReference type="ChEBI" id="CHEBI:57932"/>
        <dbReference type="ChEBI" id="CHEBI:456216"/>
        <dbReference type="EC" id="7.4.2.11"/>
    </reaction>
</comment>
<comment type="subunit">
    <text evidence="1">The complex is composed of two ATP-binding proteins (MetN), two transmembrane proteins (MetI) and a solute-binding protein (MetQ).</text>
</comment>
<comment type="subcellular location">
    <subcellularLocation>
        <location evidence="1">Cell inner membrane</location>
        <topology evidence="1">Peripheral membrane protein</topology>
    </subcellularLocation>
</comment>
<comment type="similarity">
    <text evidence="1">Belongs to the ABC transporter superfamily. Methionine importer (TC 3.A.1.24) family.</text>
</comment>
<feature type="chain" id="PRO_0000270345" description="Methionine import ATP-binding protein MetN 1">
    <location>
        <begin position="1"/>
        <end position="369"/>
    </location>
</feature>
<feature type="domain" description="ABC transporter" evidence="1">
    <location>
        <begin position="29"/>
        <end position="265"/>
    </location>
</feature>
<feature type="binding site" evidence="1">
    <location>
        <begin position="62"/>
        <end position="69"/>
    </location>
    <ligand>
        <name>ATP</name>
        <dbReference type="ChEBI" id="CHEBI:30616"/>
    </ligand>
</feature>
<keyword id="KW-0029">Amino-acid transport</keyword>
<keyword id="KW-0067">ATP-binding</keyword>
<keyword id="KW-0997">Cell inner membrane</keyword>
<keyword id="KW-1003">Cell membrane</keyword>
<keyword id="KW-0472">Membrane</keyword>
<keyword id="KW-0547">Nucleotide-binding</keyword>
<keyword id="KW-1185">Reference proteome</keyword>
<keyword id="KW-1278">Translocase</keyword>
<keyword id="KW-0813">Transport</keyword>
<sequence>MTAMTVPPSLLPLEPFPTAPDTRASTPHIRLHGLGKRYPGGVQALREIDLEIRRGEVFGIIGRSGAGKSSLIRTLNRLERPSEGQVLIDDEDIGGYDGQRLVALRRRIGMIFQHFNLMSAKTVRQNIALPLRVAGVPRARIEERVAGLLQLVGLEEKRDAYPAQLSGGQKQRVGIARALVHQPQILLCDEATSALDPESTQAILALLRDINRRLGLTIVLITHEMAVIREICDRVVVLECGRIVEQGEVWEVFGDPRHAVTRSLLGSLRAALPADLQARLRQAPGAGDPVLLDLQYTGASRRVPDLLAIARAIGQRVDLLHGGIERIQGRALGRLLLQVGAPPGELPGVLAKAALVADKVEVLGHVAHA</sequence>
<proteinExistence type="inferred from homology"/>
<protein>
    <recommendedName>
        <fullName evidence="1">Methionine import ATP-binding protein MetN 1</fullName>
        <ecNumber evidence="1">7.4.2.11</ecNumber>
    </recommendedName>
</protein>
<accession>Q9I1C8</accession>
<dbReference type="EC" id="7.4.2.11" evidence="1"/>
<dbReference type="EMBL" id="AE004091">
    <property type="protein sequence ID" value="AAG05738.1"/>
    <property type="molecule type" value="Genomic_DNA"/>
</dbReference>
<dbReference type="PIR" id="G83351">
    <property type="entry name" value="G83351"/>
</dbReference>
<dbReference type="RefSeq" id="NP_251040.1">
    <property type="nucleotide sequence ID" value="NC_002516.2"/>
</dbReference>
<dbReference type="RefSeq" id="WP_010895607.1">
    <property type="nucleotide sequence ID" value="NZ_QZGE01000021.1"/>
</dbReference>
<dbReference type="SMR" id="Q9I1C8"/>
<dbReference type="STRING" id="208964.PA2350"/>
<dbReference type="PaxDb" id="208964-PA2350"/>
<dbReference type="GeneID" id="878114"/>
<dbReference type="KEGG" id="pae:PA2350"/>
<dbReference type="PATRIC" id="fig|208964.12.peg.2459"/>
<dbReference type="PseudoCAP" id="PA2350"/>
<dbReference type="HOGENOM" id="CLU_000604_1_3_6"/>
<dbReference type="InParanoid" id="Q9I1C8"/>
<dbReference type="OrthoDB" id="9802264at2"/>
<dbReference type="PhylomeDB" id="Q9I1C8"/>
<dbReference type="BioCyc" id="PAER208964:G1FZ6-2389-MONOMER"/>
<dbReference type="Proteomes" id="UP000002438">
    <property type="component" value="Chromosome"/>
</dbReference>
<dbReference type="GO" id="GO:0005886">
    <property type="term" value="C:plasma membrane"/>
    <property type="evidence" value="ECO:0007669"/>
    <property type="project" value="UniProtKB-SubCell"/>
</dbReference>
<dbReference type="GO" id="GO:0033232">
    <property type="term" value="F:ABC-type D-methionine transporter activity"/>
    <property type="evidence" value="ECO:0007669"/>
    <property type="project" value="UniProtKB-EC"/>
</dbReference>
<dbReference type="GO" id="GO:0005524">
    <property type="term" value="F:ATP binding"/>
    <property type="evidence" value="ECO:0007669"/>
    <property type="project" value="UniProtKB-KW"/>
</dbReference>
<dbReference type="GO" id="GO:0016887">
    <property type="term" value="F:ATP hydrolysis activity"/>
    <property type="evidence" value="ECO:0007669"/>
    <property type="project" value="InterPro"/>
</dbReference>
<dbReference type="CDD" id="cd03258">
    <property type="entry name" value="ABC_MetN_methionine_transporter"/>
    <property type="match status" value="1"/>
</dbReference>
<dbReference type="FunFam" id="3.40.50.300:FF:000056">
    <property type="entry name" value="Cell division ATP-binding protein FtsE"/>
    <property type="match status" value="1"/>
</dbReference>
<dbReference type="Gene3D" id="3.30.70.260">
    <property type="match status" value="1"/>
</dbReference>
<dbReference type="Gene3D" id="3.40.50.300">
    <property type="entry name" value="P-loop containing nucleotide triphosphate hydrolases"/>
    <property type="match status" value="1"/>
</dbReference>
<dbReference type="InterPro" id="IPR003593">
    <property type="entry name" value="AAA+_ATPase"/>
</dbReference>
<dbReference type="InterPro" id="IPR003439">
    <property type="entry name" value="ABC_transporter-like_ATP-bd"/>
</dbReference>
<dbReference type="InterPro" id="IPR017871">
    <property type="entry name" value="ABC_transporter-like_CS"/>
</dbReference>
<dbReference type="InterPro" id="IPR045865">
    <property type="entry name" value="ACT-like_dom_sf"/>
</dbReference>
<dbReference type="InterPro" id="IPR041701">
    <property type="entry name" value="MetN_ABC"/>
</dbReference>
<dbReference type="InterPro" id="IPR050086">
    <property type="entry name" value="MetN_ABC_transporter-like"/>
</dbReference>
<dbReference type="InterPro" id="IPR018449">
    <property type="entry name" value="NIL_domain"/>
</dbReference>
<dbReference type="InterPro" id="IPR027417">
    <property type="entry name" value="P-loop_NTPase"/>
</dbReference>
<dbReference type="PANTHER" id="PTHR43166">
    <property type="entry name" value="AMINO ACID IMPORT ATP-BINDING PROTEIN"/>
    <property type="match status" value="1"/>
</dbReference>
<dbReference type="PANTHER" id="PTHR43166:SF30">
    <property type="entry name" value="METHIONINE IMPORT ATP-BINDING PROTEIN METN"/>
    <property type="match status" value="1"/>
</dbReference>
<dbReference type="Pfam" id="PF00005">
    <property type="entry name" value="ABC_tran"/>
    <property type="match status" value="1"/>
</dbReference>
<dbReference type="Pfam" id="PF09383">
    <property type="entry name" value="NIL"/>
    <property type="match status" value="1"/>
</dbReference>
<dbReference type="SMART" id="SM00382">
    <property type="entry name" value="AAA"/>
    <property type="match status" value="1"/>
</dbReference>
<dbReference type="SMART" id="SM00930">
    <property type="entry name" value="NIL"/>
    <property type="match status" value="1"/>
</dbReference>
<dbReference type="SUPFAM" id="SSF55021">
    <property type="entry name" value="ACT-like"/>
    <property type="match status" value="1"/>
</dbReference>
<dbReference type="SUPFAM" id="SSF52540">
    <property type="entry name" value="P-loop containing nucleoside triphosphate hydrolases"/>
    <property type="match status" value="1"/>
</dbReference>
<dbReference type="PROSITE" id="PS00211">
    <property type="entry name" value="ABC_TRANSPORTER_1"/>
    <property type="match status" value="1"/>
</dbReference>
<dbReference type="PROSITE" id="PS50893">
    <property type="entry name" value="ABC_TRANSPORTER_2"/>
    <property type="match status" value="1"/>
</dbReference>
<dbReference type="PROSITE" id="PS51264">
    <property type="entry name" value="METN"/>
    <property type="match status" value="1"/>
</dbReference>
<gene>
    <name evidence="1" type="primary">metN1</name>
    <name type="ordered locus">PA2350</name>
</gene>